<evidence type="ECO:0000255" key="1">
    <source>
        <dbReference type="HAMAP-Rule" id="MF_00475"/>
    </source>
</evidence>
<name>TRPR_CHLTB</name>
<keyword id="KW-0963">Cytoplasm</keyword>
<keyword id="KW-0238">DNA-binding</keyword>
<keyword id="KW-0678">Repressor</keyword>
<keyword id="KW-0804">Transcription</keyword>
<keyword id="KW-0805">Transcription regulation</keyword>
<reference key="1">
    <citation type="journal article" date="2008" name="Genome Res.">
        <title>Chlamydia trachomatis: genome sequence analysis of lymphogranuloma venereum isolates.</title>
        <authorList>
            <person name="Thomson N.R."/>
            <person name="Holden M.T.G."/>
            <person name="Carder C."/>
            <person name="Lennard N."/>
            <person name="Lockey S.J."/>
            <person name="Marsh P."/>
            <person name="Skipp P."/>
            <person name="O'Connor C.D."/>
            <person name="Goodhead I."/>
            <person name="Norbertzcak H."/>
            <person name="Harris B."/>
            <person name="Ormond D."/>
            <person name="Rance R."/>
            <person name="Quail M.A."/>
            <person name="Parkhill J."/>
            <person name="Stephens R.S."/>
            <person name="Clarke I.N."/>
        </authorList>
    </citation>
    <scope>NUCLEOTIDE SEQUENCE [LARGE SCALE GENOMIC DNA]</scope>
    <source>
        <strain>UCH-1/proctitis</strain>
    </source>
</reference>
<dbReference type="EMBL" id="AM884177">
    <property type="protein sequence ID" value="CAP06814.1"/>
    <property type="molecule type" value="Genomic_DNA"/>
</dbReference>
<dbReference type="RefSeq" id="WP_009873611.1">
    <property type="nucleotide sequence ID" value="NC_010280.2"/>
</dbReference>
<dbReference type="SMR" id="B0BBF0"/>
<dbReference type="KEGG" id="ctl:CTLon_0416"/>
<dbReference type="HOGENOM" id="CLU_147939_0_2_0"/>
<dbReference type="Proteomes" id="UP001154401">
    <property type="component" value="Chromosome"/>
</dbReference>
<dbReference type="GO" id="GO:0005737">
    <property type="term" value="C:cytoplasm"/>
    <property type="evidence" value="ECO:0007669"/>
    <property type="project" value="UniProtKB-SubCell"/>
</dbReference>
<dbReference type="GO" id="GO:0003700">
    <property type="term" value="F:DNA-binding transcription factor activity"/>
    <property type="evidence" value="ECO:0007669"/>
    <property type="project" value="InterPro"/>
</dbReference>
<dbReference type="GO" id="GO:0043565">
    <property type="term" value="F:sequence-specific DNA binding"/>
    <property type="evidence" value="ECO:0007669"/>
    <property type="project" value="InterPro"/>
</dbReference>
<dbReference type="GO" id="GO:0045892">
    <property type="term" value="P:negative regulation of DNA-templated transcription"/>
    <property type="evidence" value="ECO:0007669"/>
    <property type="project" value="UniProtKB-UniRule"/>
</dbReference>
<dbReference type="Gene3D" id="1.10.1270.10">
    <property type="entry name" value="TrpR-like"/>
    <property type="match status" value="1"/>
</dbReference>
<dbReference type="HAMAP" id="MF_00475">
    <property type="entry name" value="Trp_repressor"/>
    <property type="match status" value="1"/>
</dbReference>
<dbReference type="InterPro" id="IPR000831">
    <property type="entry name" value="Trp_repress"/>
</dbReference>
<dbReference type="InterPro" id="IPR013335">
    <property type="entry name" value="Trp_repress_bac"/>
</dbReference>
<dbReference type="InterPro" id="IPR010921">
    <property type="entry name" value="Trp_repressor/repl_initiator"/>
</dbReference>
<dbReference type="InterPro" id="IPR038116">
    <property type="entry name" value="TrpR-like_sf"/>
</dbReference>
<dbReference type="NCBIfam" id="TIGR01321">
    <property type="entry name" value="TrpR"/>
    <property type="match status" value="1"/>
</dbReference>
<dbReference type="PANTHER" id="PTHR38025">
    <property type="entry name" value="TRP OPERON REPRESSOR"/>
    <property type="match status" value="1"/>
</dbReference>
<dbReference type="PANTHER" id="PTHR38025:SF1">
    <property type="entry name" value="TRP OPERON REPRESSOR"/>
    <property type="match status" value="1"/>
</dbReference>
<dbReference type="Pfam" id="PF01371">
    <property type="entry name" value="Trp_repressor"/>
    <property type="match status" value="1"/>
</dbReference>
<dbReference type="PIRSF" id="PIRSF003196">
    <property type="entry name" value="Trp_repressor"/>
    <property type="match status" value="1"/>
</dbReference>
<dbReference type="SUPFAM" id="SSF48295">
    <property type="entry name" value="TrpR-like"/>
    <property type="match status" value="1"/>
</dbReference>
<comment type="function">
    <text evidence="1">This protein is an aporepressor. When complexed with L-tryptophan it binds the operator region of the trp operon and prevents the initiation of transcription.</text>
</comment>
<comment type="subunit">
    <text evidence="1">Homodimer.</text>
</comment>
<comment type="subcellular location">
    <subcellularLocation>
        <location evidence="1">Cytoplasm</location>
    </subcellularLocation>
</comment>
<comment type="similarity">
    <text evidence="1">Belongs to the TrpR family.</text>
</comment>
<accession>B0BBF0</accession>
<feature type="chain" id="PRO_1000197140" description="Trp operon repressor homolog">
    <location>
        <begin position="1"/>
        <end position="94"/>
    </location>
</feature>
<feature type="DNA-binding region" evidence="1">
    <location>
        <begin position="58"/>
        <end position="81"/>
    </location>
</feature>
<proteinExistence type="inferred from homology"/>
<gene>
    <name evidence="1" type="primary">trpR</name>
    <name type="ordered locus">CTLon_0416</name>
</gene>
<organism>
    <name type="scientific">Chlamydia trachomatis serovar L2b (strain UCH-1/proctitis)</name>
    <dbReference type="NCBI Taxonomy" id="471473"/>
    <lineage>
        <taxon>Bacteria</taxon>
        <taxon>Pseudomonadati</taxon>
        <taxon>Chlamydiota</taxon>
        <taxon>Chlamydiia</taxon>
        <taxon>Chlamydiales</taxon>
        <taxon>Chlamydiaceae</taxon>
        <taxon>Chlamydia/Chlamydophila group</taxon>
        <taxon>Chlamydia</taxon>
    </lineage>
</organism>
<protein>
    <recommendedName>
        <fullName evidence="1">Trp operon repressor homolog</fullName>
    </recommendedName>
</protein>
<sequence length="94" mass="10875">MKNQEESGWQAFLTLCSKMQKEKFLQDLFSLFLSFGERKDVASRYHIIRALLEGELTQREIAEKYGVSIAQITRGSNALKGSDPQFKEFLQKEI</sequence>